<evidence type="ECO:0000255" key="1">
    <source>
        <dbReference type="HAMAP-Rule" id="MF_01365"/>
    </source>
</evidence>
<evidence type="ECO:0000305" key="2"/>
<sequence>MSRIGNSPVAVPSNVTVTINGQNVEVKGPKGTLAIDVPEPITIAQEGDEIVVSRPDDHRKSRSLHGLSRSLINNMVVGVTEGYTIKMEIFGVGYRVLAKGSDLEFSLGYSHPILIKAPEGITFAVDGQTKFSISGIDKQQVGQLAANIRRLRKDDPYKGKGIRYEGEQIRRKVGKTGK</sequence>
<accession>C4LL11</accession>
<comment type="function">
    <text evidence="1">This protein binds to the 23S rRNA, and is important in its secondary structure. It is located near the subunit interface in the base of the L7/L12 stalk, and near the tRNA binding site of the peptidyltransferase center.</text>
</comment>
<comment type="subunit">
    <text evidence="1">Part of the 50S ribosomal subunit.</text>
</comment>
<comment type="similarity">
    <text evidence="1">Belongs to the universal ribosomal protein uL6 family.</text>
</comment>
<gene>
    <name evidence="1" type="primary">rplF</name>
    <name type="ordered locus">ckrop_1795</name>
</gene>
<protein>
    <recommendedName>
        <fullName evidence="1">Large ribosomal subunit protein uL6</fullName>
    </recommendedName>
    <alternativeName>
        <fullName evidence="2">50S ribosomal protein L6</fullName>
    </alternativeName>
</protein>
<reference key="1">
    <citation type="journal article" date="2008" name="J. Biotechnol.">
        <title>Ultrafast pyrosequencing of Corynebacterium kroppenstedtii DSM44385 revealed insights into the physiology of a lipophilic corynebacterium that lacks mycolic acids.</title>
        <authorList>
            <person name="Tauch A."/>
            <person name="Schneider J."/>
            <person name="Szczepanowski R."/>
            <person name="Tilker A."/>
            <person name="Viehoever P."/>
            <person name="Gartemann K.-H."/>
            <person name="Arnold W."/>
            <person name="Blom J."/>
            <person name="Brinkrolf K."/>
            <person name="Brune I."/>
            <person name="Goetker S."/>
            <person name="Weisshaar B."/>
            <person name="Goesmann A."/>
            <person name="Droege M."/>
            <person name="Puehler A."/>
        </authorList>
    </citation>
    <scope>NUCLEOTIDE SEQUENCE [LARGE SCALE GENOMIC DNA]</scope>
    <source>
        <strain>DSM 44385 / JCM 11950 / CIP 105744 / CCUG 35717</strain>
    </source>
</reference>
<keyword id="KW-1185">Reference proteome</keyword>
<keyword id="KW-0687">Ribonucleoprotein</keyword>
<keyword id="KW-0689">Ribosomal protein</keyword>
<keyword id="KW-0694">RNA-binding</keyword>
<keyword id="KW-0699">rRNA-binding</keyword>
<feature type="chain" id="PRO_1000214920" description="Large ribosomal subunit protein uL6">
    <location>
        <begin position="1"/>
        <end position="178"/>
    </location>
</feature>
<dbReference type="EMBL" id="CP001620">
    <property type="protein sequence ID" value="ACR18516.1"/>
    <property type="molecule type" value="Genomic_DNA"/>
</dbReference>
<dbReference type="RefSeq" id="WP_012732403.1">
    <property type="nucleotide sequence ID" value="NC_012704.1"/>
</dbReference>
<dbReference type="SMR" id="C4LL11"/>
<dbReference type="STRING" id="645127.ckrop_1795"/>
<dbReference type="GeneID" id="92726594"/>
<dbReference type="KEGG" id="ckp:ckrop_1795"/>
<dbReference type="eggNOG" id="COG0097">
    <property type="taxonomic scope" value="Bacteria"/>
</dbReference>
<dbReference type="HOGENOM" id="CLU_065464_1_2_11"/>
<dbReference type="OrthoDB" id="9805007at2"/>
<dbReference type="Proteomes" id="UP000001473">
    <property type="component" value="Chromosome"/>
</dbReference>
<dbReference type="GO" id="GO:0022625">
    <property type="term" value="C:cytosolic large ribosomal subunit"/>
    <property type="evidence" value="ECO:0007669"/>
    <property type="project" value="TreeGrafter"/>
</dbReference>
<dbReference type="GO" id="GO:0019843">
    <property type="term" value="F:rRNA binding"/>
    <property type="evidence" value="ECO:0007669"/>
    <property type="project" value="UniProtKB-UniRule"/>
</dbReference>
<dbReference type="GO" id="GO:0003735">
    <property type="term" value="F:structural constituent of ribosome"/>
    <property type="evidence" value="ECO:0007669"/>
    <property type="project" value="InterPro"/>
</dbReference>
<dbReference type="GO" id="GO:0002181">
    <property type="term" value="P:cytoplasmic translation"/>
    <property type="evidence" value="ECO:0007669"/>
    <property type="project" value="TreeGrafter"/>
</dbReference>
<dbReference type="FunFam" id="3.90.930.12:FF:000001">
    <property type="entry name" value="50S ribosomal protein L6"/>
    <property type="match status" value="1"/>
</dbReference>
<dbReference type="FunFam" id="3.90.930.12:FF:000002">
    <property type="entry name" value="50S ribosomal protein L6"/>
    <property type="match status" value="1"/>
</dbReference>
<dbReference type="Gene3D" id="3.90.930.12">
    <property type="entry name" value="Ribosomal protein L6, alpha-beta domain"/>
    <property type="match status" value="2"/>
</dbReference>
<dbReference type="HAMAP" id="MF_01365_B">
    <property type="entry name" value="Ribosomal_uL6_B"/>
    <property type="match status" value="1"/>
</dbReference>
<dbReference type="InterPro" id="IPR000702">
    <property type="entry name" value="Ribosomal_uL6-like"/>
</dbReference>
<dbReference type="InterPro" id="IPR036789">
    <property type="entry name" value="Ribosomal_uL6-like_a/b-dom_sf"/>
</dbReference>
<dbReference type="InterPro" id="IPR020040">
    <property type="entry name" value="Ribosomal_uL6_a/b-dom"/>
</dbReference>
<dbReference type="InterPro" id="IPR019906">
    <property type="entry name" value="Ribosomal_uL6_bac-type"/>
</dbReference>
<dbReference type="NCBIfam" id="TIGR03654">
    <property type="entry name" value="L6_bact"/>
    <property type="match status" value="1"/>
</dbReference>
<dbReference type="PANTHER" id="PTHR11655">
    <property type="entry name" value="60S/50S RIBOSOMAL PROTEIN L6/L9"/>
    <property type="match status" value="1"/>
</dbReference>
<dbReference type="PANTHER" id="PTHR11655:SF14">
    <property type="entry name" value="LARGE RIBOSOMAL SUBUNIT PROTEIN UL6M"/>
    <property type="match status" value="1"/>
</dbReference>
<dbReference type="Pfam" id="PF00347">
    <property type="entry name" value="Ribosomal_L6"/>
    <property type="match status" value="2"/>
</dbReference>
<dbReference type="PIRSF" id="PIRSF002162">
    <property type="entry name" value="Ribosomal_L6"/>
    <property type="match status" value="1"/>
</dbReference>
<dbReference type="PRINTS" id="PR00059">
    <property type="entry name" value="RIBOSOMALL6"/>
</dbReference>
<dbReference type="SUPFAM" id="SSF56053">
    <property type="entry name" value="Ribosomal protein L6"/>
    <property type="match status" value="2"/>
</dbReference>
<proteinExistence type="inferred from homology"/>
<organism>
    <name type="scientific">Corynebacterium kroppenstedtii (strain DSM 44385 / JCM 11950 / CIP 105744 / CCUG 35717)</name>
    <dbReference type="NCBI Taxonomy" id="645127"/>
    <lineage>
        <taxon>Bacteria</taxon>
        <taxon>Bacillati</taxon>
        <taxon>Actinomycetota</taxon>
        <taxon>Actinomycetes</taxon>
        <taxon>Mycobacteriales</taxon>
        <taxon>Corynebacteriaceae</taxon>
        <taxon>Corynebacterium</taxon>
    </lineage>
</organism>
<name>RL6_CORK4</name>